<accession>A7GJW1</accession>
<reference key="1">
    <citation type="journal article" date="2008" name="Chem. Biol. Interact.">
        <title>Extending the Bacillus cereus group genomics to putative food-borne pathogens of different toxicity.</title>
        <authorList>
            <person name="Lapidus A."/>
            <person name="Goltsman E."/>
            <person name="Auger S."/>
            <person name="Galleron N."/>
            <person name="Segurens B."/>
            <person name="Dossat C."/>
            <person name="Land M.L."/>
            <person name="Broussolle V."/>
            <person name="Brillard J."/>
            <person name="Guinebretiere M.-H."/>
            <person name="Sanchis V."/>
            <person name="Nguen-the C."/>
            <person name="Lereclus D."/>
            <person name="Richardson P."/>
            <person name="Wincker P."/>
            <person name="Weissenbach J."/>
            <person name="Ehrlich S.D."/>
            <person name="Sorokin A."/>
        </authorList>
    </citation>
    <scope>NUCLEOTIDE SEQUENCE [LARGE SCALE GENOMIC DNA]</scope>
    <source>
        <strain>DSM 22905 / CIP 110041 / 391-98 / NVH 391-98</strain>
    </source>
</reference>
<comment type="function">
    <text evidence="1">Catalyzes the last two sequential reactions in the de novo biosynthetic pathway for UDP-N-acetylglucosamine (UDP-GlcNAc). The C-terminal domain catalyzes the transfer of acetyl group from acetyl coenzyme A to glucosamine-1-phosphate (GlcN-1-P) to produce N-acetylglucosamine-1-phosphate (GlcNAc-1-P), which is converted into UDP-GlcNAc by the transfer of uridine 5-monophosphate (from uridine 5-triphosphate), a reaction catalyzed by the N-terminal domain.</text>
</comment>
<comment type="catalytic activity">
    <reaction evidence="1">
        <text>alpha-D-glucosamine 1-phosphate + acetyl-CoA = N-acetyl-alpha-D-glucosamine 1-phosphate + CoA + H(+)</text>
        <dbReference type="Rhea" id="RHEA:13725"/>
        <dbReference type="ChEBI" id="CHEBI:15378"/>
        <dbReference type="ChEBI" id="CHEBI:57287"/>
        <dbReference type="ChEBI" id="CHEBI:57288"/>
        <dbReference type="ChEBI" id="CHEBI:57776"/>
        <dbReference type="ChEBI" id="CHEBI:58516"/>
        <dbReference type="EC" id="2.3.1.157"/>
    </reaction>
</comment>
<comment type="catalytic activity">
    <reaction evidence="1">
        <text>N-acetyl-alpha-D-glucosamine 1-phosphate + UTP + H(+) = UDP-N-acetyl-alpha-D-glucosamine + diphosphate</text>
        <dbReference type="Rhea" id="RHEA:13509"/>
        <dbReference type="ChEBI" id="CHEBI:15378"/>
        <dbReference type="ChEBI" id="CHEBI:33019"/>
        <dbReference type="ChEBI" id="CHEBI:46398"/>
        <dbReference type="ChEBI" id="CHEBI:57705"/>
        <dbReference type="ChEBI" id="CHEBI:57776"/>
        <dbReference type="EC" id="2.7.7.23"/>
    </reaction>
</comment>
<comment type="cofactor">
    <cofactor evidence="1">
        <name>Mg(2+)</name>
        <dbReference type="ChEBI" id="CHEBI:18420"/>
    </cofactor>
    <text evidence="1">Binds 1 Mg(2+) ion per subunit.</text>
</comment>
<comment type="pathway">
    <text evidence="1">Nucleotide-sugar biosynthesis; UDP-N-acetyl-alpha-D-glucosamine biosynthesis; N-acetyl-alpha-D-glucosamine 1-phosphate from alpha-D-glucosamine 6-phosphate (route II): step 2/2.</text>
</comment>
<comment type="pathway">
    <text evidence="1">Nucleotide-sugar biosynthesis; UDP-N-acetyl-alpha-D-glucosamine biosynthesis; UDP-N-acetyl-alpha-D-glucosamine from N-acetyl-alpha-D-glucosamine 1-phosphate: step 1/1.</text>
</comment>
<comment type="pathway">
    <text evidence="1">Bacterial outer membrane biogenesis; LPS lipid A biosynthesis.</text>
</comment>
<comment type="subunit">
    <text evidence="1">Homotrimer.</text>
</comment>
<comment type="subcellular location">
    <subcellularLocation>
        <location evidence="1">Cytoplasm</location>
    </subcellularLocation>
</comment>
<comment type="similarity">
    <text evidence="1">In the N-terminal section; belongs to the N-acetylglucosamine-1-phosphate uridyltransferase family.</text>
</comment>
<comment type="similarity">
    <text evidence="1">In the C-terminal section; belongs to the transferase hexapeptide repeat family.</text>
</comment>
<name>GLMU_BACCN</name>
<gene>
    <name evidence="1" type="primary">glmU</name>
    <name type="ordered locus">Bcer98_0044</name>
</gene>
<feature type="chain" id="PRO_1000088123" description="Bifunctional protein GlmU">
    <location>
        <begin position="1"/>
        <end position="459"/>
    </location>
</feature>
<feature type="region of interest" description="Pyrophosphorylase" evidence="1">
    <location>
        <begin position="1"/>
        <end position="230"/>
    </location>
</feature>
<feature type="region of interest" description="Linker" evidence="1">
    <location>
        <begin position="231"/>
        <end position="251"/>
    </location>
</feature>
<feature type="region of interest" description="N-acetyltransferase" evidence="1">
    <location>
        <begin position="252"/>
        <end position="459"/>
    </location>
</feature>
<feature type="active site" description="Proton acceptor" evidence="1">
    <location>
        <position position="363"/>
    </location>
</feature>
<feature type="binding site" evidence="1">
    <location>
        <begin position="9"/>
        <end position="12"/>
    </location>
    <ligand>
        <name>UDP-N-acetyl-alpha-D-glucosamine</name>
        <dbReference type="ChEBI" id="CHEBI:57705"/>
    </ligand>
</feature>
<feature type="binding site" evidence="1">
    <location>
        <position position="23"/>
    </location>
    <ligand>
        <name>UDP-N-acetyl-alpha-D-glucosamine</name>
        <dbReference type="ChEBI" id="CHEBI:57705"/>
    </ligand>
</feature>
<feature type="binding site" evidence="1">
    <location>
        <position position="73"/>
    </location>
    <ligand>
        <name>UDP-N-acetyl-alpha-D-glucosamine</name>
        <dbReference type="ChEBI" id="CHEBI:57705"/>
    </ligand>
</feature>
<feature type="binding site" evidence="1">
    <location>
        <begin position="78"/>
        <end position="79"/>
    </location>
    <ligand>
        <name>UDP-N-acetyl-alpha-D-glucosamine</name>
        <dbReference type="ChEBI" id="CHEBI:57705"/>
    </ligand>
</feature>
<feature type="binding site" evidence="1">
    <location>
        <position position="103"/>
    </location>
    <ligand>
        <name>Mg(2+)</name>
        <dbReference type="ChEBI" id="CHEBI:18420"/>
    </ligand>
</feature>
<feature type="binding site" evidence="1">
    <location>
        <position position="140"/>
    </location>
    <ligand>
        <name>UDP-N-acetyl-alpha-D-glucosamine</name>
        <dbReference type="ChEBI" id="CHEBI:57705"/>
    </ligand>
</feature>
<feature type="binding site" evidence="1">
    <location>
        <position position="155"/>
    </location>
    <ligand>
        <name>UDP-N-acetyl-alpha-D-glucosamine</name>
        <dbReference type="ChEBI" id="CHEBI:57705"/>
    </ligand>
</feature>
<feature type="binding site" evidence="1">
    <location>
        <position position="170"/>
    </location>
    <ligand>
        <name>UDP-N-acetyl-alpha-D-glucosamine</name>
        <dbReference type="ChEBI" id="CHEBI:57705"/>
    </ligand>
</feature>
<feature type="binding site" evidence="1">
    <location>
        <position position="228"/>
    </location>
    <ligand>
        <name>Mg(2+)</name>
        <dbReference type="ChEBI" id="CHEBI:18420"/>
    </ligand>
</feature>
<feature type="binding site" evidence="1">
    <location>
        <position position="228"/>
    </location>
    <ligand>
        <name>UDP-N-acetyl-alpha-D-glucosamine</name>
        <dbReference type="ChEBI" id="CHEBI:57705"/>
    </ligand>
</feature>
<feature type="binding site" evidence="1">
    <location>
        <position position="333"/>
    </location>
    <ligand>
        <name>UDP-N-acetyl-alpha-D-glucosamine</name>
        <dbReference type="ChEBI" id="CHEBI:57705"/>
    </ligand>
</feature>
<feature type="binding site" evidence="1">
    <location>
        <position position="351"/>
    </location>
    <ligand>
        <name>UDP-N-acetyl-alpha-D-glucosamine</name>
        <dbReference type="ChEBI" id="CHEBI:57705"/>
    </ligand>
</feature>
<feature type="binding site" evidence="1">
    <location>
        <position position="366"/>
    </location>
    <ligand>
        <name>UDP-N-acetyl-alpha-D-glucosamine</name>
        <dbReference type="ChEBI" id="CHEBI:57705"/>
    </ligand>
</feature>
<feature type="binding site" evidence="1">
    <location>
        <position position="377"/>
    </location>
    <ligand>
        <name>UDP-N-acetyl-alpha-D-glucosamine</name>
        <dbReference type="ChEBI" id="CHEBI:57705"/>
    </ligand>
</feature>
<feature type="binding site" evidence="1">
    <location>
        <begin position="386"/>
        <end position="387"/>
    </location>
    <ligand>
        <name>acetyl-CoA</name>
        <dbReference type="ChEBI" id="CHEBI:57288"/>
    </ligand>
</feature>
<feature type="binding site" evidence="1">
    <location>
        <position position="423"/>
    </location>
    <ligand>
        <name>acetyl-CoA</name>
        <dbReference type="ChEBI" id="CHEBI:57288"/>
    </ligand>
</feature>
<feature type="binding site" evidence="1">
    <location>
        <position position="440"/>
    </location>
    <ligand>
        <name>acetyl-CoA</name>
        <dbReference type="ChEBI" id="CHEBI:57288"/>
    </ligand>
</feature>
<organism>
    <name type="scientific">Bacillus cytotoxicus (strain DSM 22905 / CIP 110041 / 391-98 / NVH 391-98)</name>
    <dbReference type="NCBI Taxonomy" id="315749"/>
    <lineage>
        <taxon>Bacteria</taxon>
        <taxon>Bacillati</taxon>
        <taxon>Bacillota</taxon>
        <taxon>Bacilli</taxon>
        <taxon>Bacillales</taxon>
        <taxon>Bacillaceae</taxon>
        <taxon>Bacillus</taxon>
        <taxon>Bacillus cereus group</taxon>
    </lineage>
</organism>
<proteinExistence type="inferred from homology"/>
<protein>
    <recommendedName>
        <fullName evidence="1">Bifunctional protein GlmU</fullName>
    </recommendedName>
    <domain>
        <recommendedName>
            <fullName evidence="1">UDP-N-acetylglucosamine pyrophosphorylase</fullName>
            <ecNumber evidence="1">2.7.7.23</ecNumber>
        </recommendedName>
        <alternativeName>
            <fullName evidence="1">N-acetylglucosamine-1-phosphate uridyltransferase</fullName>
        </alternativeName>
    </domain>
    <domain>
        <recommendedName>
            <fullName evidence="1">Glucosamine-1-phosphate N-acetyltransferase</fullName>
            <ecNumber evidence="1">2.3.1.157</ecNumber>
        </recommendedName>
    </domain>
</protein>
<sequence length="459" mass="49253">MSNRFAVILAAGKGTRMKSKLYKVLHPVCGKPMVQHVVDQVSQLGLQKLVTVVGHGAEKVQEQLGNVSEFALQAEQLGTAHAVDRAADILANEEGTTLVICGDTPLITAETMEALLKHHEEAGAKATVLTAYIEEPAGYGRIVRNENGHVEKIVEHKDANEVELTIKEINTGTYCFDNKALFASLSKVSNDNAQGEYYLPDVIEILKGEGHIVSAYQTEHFDETLGVNDRVALSQAEVIMKNRINHKNMVNGVTIIDPSNTYISADAIIGSDTVIHPGTIIEGKTVIGSDCEIGPHTVIRDSEIGDGTTIRQSTVHDSKIGTEVSVGPFAHIRPDSVIGNEVRVGNFVEIKKTVFGNGSKASHLSYIGDAQIGENVNLGCGSITVNYDGKNKFKTVIGDGVFIGCNSNLVAPVTVEDGAYVAAGSTITENVPSKALSIARARQVNKEDYVDQLLNKKKS</sequence>
<dbReference type="EC" id="2.7.7.23" evidence="1"/>
<dbReference type="EC" id="2.3.1.157" evidence="1"/>
<dbReference type="EMBL" id="CP000764">
    <property type="protein sequence ID" value="ABS20419.1"/>
    <property type="molecule type" value="Genomic_DNA"/>
</dbReference>
<dbReference type="RefSeq" id="WP_011983188.1">
    <property type="nucleotide sequence ID" value="NC_009674.1"/>
</dbReference>
<dbReference type="SMR" id="A7GJW1"/>
<dbReference type="STRING" id="315749.Bcer98_0044"/>
<dbReference type="GeneID" id="33895348"/>
<dbReference type="KEGG" id="bcy:Bcer98_0044"/>
<dbReference type="eggNOG" id="COG1207">
    <property type="taxonomic scope" value="Bacteria"/>
</dbReference>
<dbReference type="HOGENOM" id="CLU_029499_15_2_9"/>
<dbReference type="OrthoDB" id="9775031at2"/>
<dbReference type="UniPathway" id="UPA00113">
    <property type="reaction ID" value="UER00532"/>
</dbReference>
<dbReference type="UniPathway" id="UPA00113">
    <property type="reaction ID" value="UER00533"/>
</dbReference>
<dbReference type="UniPathway" id="UPA00973"/>
<dbReference type="Proteomes" id="UP000002300">
    <property type="component" value="Chromosome"/>
</dbReference>
<dbReference type="GO" id="GO:0005737">
    <property type="term" value="C:cytoplasm"/>
    <property type="evidence" value="ECO:0007669"/>
    <property type="project" value="UniProtKB-SubCell"/>
</dbReference>
<dbReference type="GO" id="GO:0016020">
    <property type="term" value="C:membrane"/>
    <property type="evidence" value="ECO:0007669"/>
    <property type="project" value="GOC"/>
</dbReference>
<dbReference type="GO" id="GO:0019134">
    <property type="term" value="F:glucosamine-1-phosphate N-acetyltransferase activity"/>
    <property type="evidence" value="ECO:0007669"/>
    <property type="project" value="UniProtKB-UniRule"/>
</dbReference>
<dbReference type="GO" id="GO:0000287">
    <property type="term" value="F:magnesium ion binding"/>
    <property type="evidence" value="ECO:0007669"/>
    <property type="project" value="UniProtKB-UniRule"/>
</dbReference>
<dbReference type="GO" id="GO:0003977">
    <property type="term" value="F:UDP-N-acetylglucosamine diphosphorylase activity"/>
    <property type="evidence" value="ECO:0007669"/>
    <property type="project" value="UniProtKB-UniRule"/>
</dbReference>
<dbReference type="GO" id="GO:0000902">
    <property type="term" value="P:cell morphogenesis"/>
    <property type="evidence" value="ECO:0007669"/>
    <property type="project" value="UniProtKB-UniRule"/>
</dbReference>
<dbReference type="GO" id="GO:0071555">
    <property type="term" value="P:cell wall organization"/>
    <property type="evidence" value="ECO:0007669"/>
    <property type="project" value="UniProtKB-KW"/>
</dbReference>
<dbReference type="GO" id="GO:0009245">
    <property type="term" value="P:lipid A biosynthetic process"/>
    <property type="evidence" value="ECO:0007669"/>
    <property type="project" value="UniProtKB-UniRule"/>
</dbReference>
<dbReference type="GO" id="GO:0009252">
    <property type="term" value="P:peptidoglycan biosynthetic process"/>
    <property type="evidence" value="ECO:0007669"/>
    <property type="project" value="UniProtKB-UniRule"/>
</dbReference>
<dbReference type="GO" id="GO:0008360">
    <property type="term" value="P:regulation of cell shape"/>
    <property type="evidence" value="ECO:0007669"/>
    <property type="project" value="UniProtKB-KW"/>
</dbReference>
<dbReference type="GO" id="GO:0006048">
    <property type="term" value="P:UDP-N-acetylglucosamine biosynthetic process"/>
    <property type="evidence" value="ECO:0007669"/>
    <property type="project" value="UniProtKB-UniPathway"/>
</dbReference>
<dbReference type="CDD" id="cd02540">
    <property type="entry name" value="GT2_GlmU_N_bac"/>
    <property type="match status" value="1"/>
</dbReference>
<dbReference type="CDD" id="cd03353">
    <property type="entry name" value="LbH_GlmU_C"/>
    <property type="match status" value="1"/>
</dbReference>
<dbReference type="FunFam" id="3.90.550.10:FF:000006">
    <property type="entry name" value="Bifunctional protein GlmU"/>
    <property type="match status" value="1"/>
</dbReference>
<dbReference type="Gene3D" id="2.160.10.10">
    <property type="entry name" value="Hexapeptide repeat proteins"/>
    <property type="match status" value="1"/>
</dbReference>
<dbReference type="Gene3D" id="3.90.550.10">
    <property type="entry name" value="Spore Coat Polysaccharide Biosynthesis Protein SpsA, Chain A"/>
    <property type="match status" value="1"/>
</dbReference>
<dbReference type="HAMAP" id="MF_01631">
    <property type="entry name" value="GlmU"/>
    <property type="match status" value="1"/>
</dbReference>
<dbReference type="InterPro" id="IPR005882">
    <property type="entry name" value="Bifunctional_GlmU"/>
</dbReference>
<dbReference type="InterPro" id="IPR050065">
    <property type="entry name" value="GlmU-like"/>
</dbReference>
<dbReference type="InterPro" id="IPR038009">
    <property type="entry name" value="GlmU_C_LbH"/>
</dbReference>
<dbReference type="InterPro" id="IPR001451">
    <property type="entry name" value="Hexapep"/>
</dbReference>
<dbReference type="InterPro" id="IPR018357">
    <property type="entry name" value="Hexapep_transf_CS"/>
</dbReference>
<dbReference type="InterPro" id="IPR005835">
    <property type="entry name" value="NTP_transferase_dom"/>
</dbReference>
<dbReference type="InterPro" id="IPR029044">
    <property type="entry name" value="Nucleotide-diphossugar_trans"/>
</dbReference>
<dbReference type="InterPro" id="IPR011004">
    <property type="entry name" value="Trimer_LpxA-like_sf"/>
</dbReference>
<dbReference type="NCBIfam" id="TIGR01173">
    <property type="entry name" value="glmU"/>
    <property type="match status" value="1"/>
</dbReference>
<dbReference type="NCBIfam" id="NF010934">
    <property type="entry name" value="PRK14354.1"/>
    <property type="match status" value="1"/>
</dbReference>
<dbReference type="PANTHER" id="PTHR43584:SF3">
    <property type="entry name" value="BIFUNCTIONAL PROTEIN GLMU"/>
    <property type="match status" value="1"/>
</dbReference>
<dbReference type="PANTHER" id="PTHR43584">
    <property type="entry name" value="NUCLEOTIDYL TRANSFERASE"/>
    <property type="match status" value="1"/>
</dbReference>
<dbReference type="Pfam" id="PF00132">
    <property type="entry name" value="Hexapep"/>
    <property type="match status" value="3"/>
</dbReference>
<dbReference type="Pfam" id="PF00483">
    <property type="entry name" value="NTP_transferase"/>
    <property type="match status" value="1"/>
</dbReference>
<dbReference type="SUPFAM" id="SSF53448">
    <property type="entry name" value="Nucleotide-diphospho-sugar transferases"/>
    <property type="match status" value="1"/>
</dbReference>
<dbReference type="SUPFAM" id="SSF51161">
    <property type="entry name" value="Trimeric LpxA-like enzymes"/>
    <property type="match status" value="1"/>
</dbReference>
<dbReference type="PROSITE" id="PS00101">
    <property type="entry name" value="HEXAPEP_TRANSFERASES"/>
    <property type="match status" value="1"/>
</dbReference>
<evidence type="ECO:0000255" key="1">
    <source>
        <dbReference type="HAMAP-Rule" id="MF_01631"/>
    </source>
</evidence>
<keyword id="KW-0012">Acyltransferase</keyword>
<keyword id="KW-0133">Cell shape</keyword>
<keyword id="KW-0961">Cell wall biogenesis/degradation</keyword>
<keyword id="KW-0963">Cytoplasm</keyword>
<keyword id="KW-0460">Magnesium</keyword>
<keyword id="KW-0479">Metal-binding</keyword>
<keyword id="KW-0511">Multifunctional enzyme</keyword>
<keyword id="KW-0548">Nucleotidyltransferase</keyword>
<keyword id="KW-0573">Peptidoglycan synthesis</keyword>
<keyword id="KW-0677">Repeat</keyword>
<keyword id="KW-0808">Transferase</keyword>